<evidence type="ECO:0000250" key="1">
    <source>
        <dbReference type="UniProtKB" id="P07639"/>
    </source>
</evidence>
<evidence type="ECO:0000250" key="2">
    <source>
        <dbReference type="UniProtKB" id="P9WPX9"/>
    </source>
</evidence>
<evidence type="ECO:0000250" key="3">
    <source>
        <dbReference type="UniProtKB" id="Q6GGU4"/>
    </source>
</evidence>
<evidence type="ECO:0000305" key="4"/>
<name>AROB_PICTO</name>
<organism>
    <name type="scientific">Picrophilus torridus (strain ATCC 700027 / DSM 9790 / JCM 10055 / NBRC 100828 / KAW 2/3)</name>
    <dbReference type="NCBI Taxonomy" id="1122961"/>
    <lineage>
        <taxon>Archaea</taxon>
        <taxon>Methanobacteriati</taxon>
        <taxon>Thermoplasmatota</taxon>
        <taxon>Thermoplasmata</taxon>
        <taxon>Thermoplasmatales</taxon>
        <taxon>Picrophilaceae</taxon>
        <taxon>Picrophilus</taxon>
    </lineage>
</organism>
<dbReference type="EC" id="4.2.3.4" evidence="1"/>
<dbReference type="EMBL" id="AE017261">
    <property type="protein sequence ID" value="AAT43184.1"/>
    <property type="molecule type" value="Genomic_DNA"/>
</dbReference>
<dbReference type="RefSeq" id="WP_011177400.1">
    <property type="nucleotide sequence ID" value="NC_005877.1"/>
</dbReference>
<dbReference type="SMR" id="Q6L1G8"/>
<dbReference type="FunCoup" id="Q6L1G8">
    <property type="interactions" value="166"/>
</dbReference>
<dbReference type="STRING" id="263820.PTO0599"/>
<dbReference type="PaxDb" id="263820-PTO0599"/>
<dbReference type="GeneID" id="2844923"/>
<dbReference type="KEGG" id="pto:PTO0599"/>
<dbReference type="PATRIC" id="fig|263820.9.peg.630"/>
<dbReference type="eggNOG" id="arCOG00983">
    <property type="taxonomic scope" value="Archaea"/>
</dbReference>
<dbReference type="HOGENOM" id="CLU_001201_0_1_2"/>
<dbReference type="InParanoid" id="Q6L1G8"/>
<dbReference type="OrthoDB" id="21407at2157"/>
<dbReference type="UniPathway" id="UPA00053">
    <property type="reaction ID" value="UER00085"/>
</dbReference>
<dbReference type="Proteomes" id="UP000000438">
    <property type="component" value="Chromosome"/>
</dbReference>
<dbReference type="GO" id="GO:0005737">
    <property type="term" value="C:cytoplasm"/>
    <property type="evidence" value="ECO:0007669"/>
    <property type="project" value="UniProtKB-SubCell"/>
</dbReference>
<dbReference type="GO" id="GO:0003856">
    <property type="term" value="F:3-dehydroquinate synthase activity"/>
    <property type="evidence" value="ECO:0007669"/>
    <property type="project" value="UniProtKB-EC"/>
</dbReference>
<dbReference type="GO" id="GO:0046872">
    <property type="term" value="F:metal ion binding"/>
    <property type="evidence" value="ECO:0007669"/>
    <property type="project" value="UniProtKB-KW"/>
</dbReference>
<dbReference type="GO" id="GO:0000166">
    <property type="term" value="F:nucleotide binding"/>
    <property type="evidence" value="ECO:0007669"/>
    <property type="project" value="UniProtKB-KW"/>
</dbReference>
<dbReference type="GO" id="GO:0008652">
    <property type="term" value="P:amino acid biosynthetic process"/>
    <property type="evidence" value="ECO:0007669"/>
    <property type="project" value="UniProtKB-KW"/>
</dbReference>
<dbReference type="GO" id="GO:0009073">
    <property type="term" value="P:aromatic amino acid family biosynthetic process"/>
    <property type="evidence" value="ECO:0007669"/>
    <property type="project" value="UniProtKB-KW"/>
</dbReference>
<dbReference type="GO" id="GO:0009423">
    <property type="term" value="P:chorismate biosynthetic process"/>
    <property type="evidence" value="ECO:0007669"/>
    <property type="project" value="UniProtKB-UniPathway"/>
</dbReference>
<dbReference type="CDD" id="cd08195">
    <property type="entry name" value="DHQS"/>
    <property type="match status" value="1"/>
</dbReference>
<dbReference type="Gene3D" id="3.40.50.1970">
    <property type="match status" value="1"/>
</dbReference>
<dbReference type="Gene3D" id="1.20.1090.10">
    <property type="entry name" value="Dehydroquinate synthase-like - alpha domain"/>
    <property type="match status" value="1"/>
</dbReference>
<dbReference type="InterPro" id="IPR050071">
    <property type="entry name" value="Dehydroquinate_synthase"/>
</dbReference>
<dbReference type="InterPro" id="IPR030963">
    <property type="entry name" value="DHQ_synth_fam"/>
</dbReference>
<dbReference type="InterPro" id="IPR030960">
    <property type="entry name" value="DHQS/DOIS_N"/>
</dbReference>
<dbReference type="InterPro" id="IPR056179">
    <property type="entry name" value="DHQS_C"/>
</dbReference>
<dbReference type="PANTHER" id="PTHR43622">
    <property type="entry name" value="3-DEHYDROQUINATE SYNTHASE"/>
    <property type="match status" value="1"/>
</dbReference>
<dbReference type="PANTHER" id="PTHR43622:SF1">
    <property type="entry name" value="3-DEHYDROQUINATE SYNTHASE"/>
    <property type="match status" value="1"/>
</dbReference>
<dbReference type="Pfam" id="PF01761">
    <property type="entry name" value="DHQ_synthase"/>
    <property type="match status" value="1"/>
</dbReference>
<dbReference type="Pfam" id="PF24621">
    <property type="entry name" value="DHQS_C"/>
    <property type="match status" value="1"/>
</dbReference>
<dbReference type="PIRSF" id="PIRSF001455">
    <property type="entry name" value="DHQ_synth"/>
    <property type="match status" value="1"/>
</dbReference>
<dbReference type="SUPFAM" id="SSF56796">
    <property type="entry name" value="Dehydroquinate synthase-like"/>
    <property type="match status" value="1"/>
</dbReference>
<keyword id="KW-0028">Amino-acid biosynthesis</keyword>
<keyword id="KW-0057">Aromatic amino acid biosynthesis</keyword>
<keyword id="KW-0170">Cobalt</keyword>
<keyword id="KW-0963">Cytoplasm</keyword>
<keyword id="KW-0456">Lyase</keyword>
<keyword id="KW-0479">Metal-binding</keyword>
<keyword id="KW-0520">NAD</keyword>
<keyword id="KW-0547">Nucleotide-binding</keyword>
<keyword id="KW-0862">Zinc</keyword>
<sequence length="338" mass="37756">MDLKYKLGNDVIRIVTGKNILKDFACELNSGGNISIISRNVYKKYDLSFIKNRIIIDDGERAKSMEYLTLIINELLNKRVERGDSIIYIGGGTTGDLSGFAASIYKRGMGLIAVPTTLLAQVDSSIGGKNGINYMNIKNLIGTFYNPKLIIDDISFIDDKKLMMDGLAESLKMGITIEPELFNIINNDPDYIIENIERIITLSINAKLSIVSKDFHDKKHLRYVLNFGHTIGHALESYFNNNISHGEAVANGMIIEAYISKCLGNADISNEIRSIIKRLGFKIIDFRSVDINRLLEYIKNDKKSESGYINIVAVNGIGRYKIEALSPEEMLKILGGMP</sequence>
<gene>
    <name evidence="1" type="primary">aroB</name>
    <name type="ordered locus">PTO0599</name>
</gene>
<comment type="function">
    <text evidence="1">Catalyzes the conversion of 3-deoxy-D-arabino-heptulosonate 7-phosphate (DAHP) to dehydroquinate (DHQ).</text>
</comment>
<comment type="catalytic activity">
    <reaction evidence="1">
        <text>7-phospho-2-dehydro-3-deoxy-D-arabino-heptonate = 3-dehydroquinate + phosphate</text>
        <dbReference type="Rhea" id="RHEA:21968"/>
        <dbReference type="ChEBI" id="CHEBI:32364"/>
        <dbReference type="ChEBI" id="CHEBI:43474"/>
        <dbReference type="ChEBI" id="CHEBI:58394"/>
        <dbReference type="EC" id="4.2.3.4"/>
    </reaction>
</comment>
<comment type="cofactor">
    <cofactor evidence="1">
        <name>NAD(+)</name>
        <dbReference type="ChEBI" id="CHEBI:57540"/>
    </cofactor>
</comment>
<comment type="cofactor">
    <cofactor evidence="1">
        <name>Co(2+)</name>
        <dbReference type="ChEBI" id="CHEBI:48828"/>
    </cofactor>
    <cofactor evidence="1">
        <name>Zn(2+)</name>
        <dbReference type="ChEBI" id="CHEBI:29105"/>
    </cofactor>
    <text evidence="1">Binds 1 divalent metal cation per subunit. Can use either Co(2+) or Zn(2+).</text>
</comment>
<comment type="pathway">
    <text evidence="1">Metabolic intermediate biosynthesis; chorismate biosynthesis; chorismate from D-erythrose 4-phosphate and phosphoenolpyruvate: step 2/7.</text>
</comment>
<comment type="subcellular location">
    <subcellularLocation>
        <location evidence="1">Cytoplasm</location>
    </subcellularLocation>
</comment>
<comment type="similarity">
    <text evidence="4">Belongs to the sugar phosphate cyclases superfamily. Dehydroquinate synthase family.</text>
</comment>
<accession>Q6L1G8</accession>
<protein>
    <recommendedName>
        <fullName evidence="1">3-dehydroquinate synthase</fullName>
        <shortName evidence="1">DHQS</shortName>
        <ecNumber evidence="1">4.2.3.4</ecNumber>
    </recommendedName>
</protein>
<reference key="1">
    <citation type="journal article" date="2004" name="Proc. Natl. Acad. Sci. U.S.A.">
        <title>Genome sequence of Picrophilus torridus and its implications for life around pH 0.</title>
        <authorList>
            <person name="Fuetterer O."/>
            <person name="Angelov A."/>
            <person name="Liesegang H."/>
            <person name="Gottschalk G."/>
            <person name="Schleper C."/>
            <person name="Schepers B."/>
            <person name="Dock C."/>
            <person name="Antranikian G."/>
            <person name="Liebl W."/>
        </authorList>
    </citation>
    <scope>NUCLEOTIDE SEQUENCE [LARGE SCALE GENOMIC DNA]</scope>
    <source>
        <strain>ATCC 700027 / DSM 9790 / JCM 10055 / NBRC 100828 / KAW 2/3</strain>
    </source>
</reference>
<proteinExistence type="inferred from homology"/>
<feature type="chain" id="PRO_0000140816" description="3-dehydroquinate synthase">
    <location>
        <begin position="1"/>
        <end position="338"/>
    </location>
</feature>
<feature type="binding site" evidence="2">
    <location>
        <begin position="58"/>
        <end position="63"/>
    </location>
    <ligand>
        <name>NAD(+)</name>
        <dbReference type="ChEBI" id="CHEBI:57540"/>
    </ligand>
</feature>
<feature type="binding site" evidence="2">
    <location>
        <begin position="92"/>
        <end position="96"/>
    </location>
    <ligand>
        <name>NAD(+)</name>
        <dbReference type="ChEBI" id="CHEBI:57540"/>
    </ligand>
</feature>
<feature type="binding site" evidence="2">
    <location>
        <begin position="116"/>
        <end position="117"/>
    </location>
    <ligand>
        <name>NAD(+)</name>
        <dbReference type="ChEBI" id="CHEBI:57540"/>
    </ligand>
</feature>
<feature type="binding site" evidence="2">
    <location>
        <position position="129"/>
    </location>
    <ligand>
        <name>NAD(+)</name>
        <dbReference type="ChEBI" id="CHEBI:57540"/>
    </ligand>
</feature>
<feature type="binding site" evidence="3">
    <location>
        <position position="138"/>
    </location>
    <ligand>
        <name>NAD(+)</name>
        <dbReference type="ChEBI" id="CHEBI:57540"/>
    </ligand>
</feature>
<feature type="binding site" evidence="2">
    <location>
        <position position="169"/>
    </location>
    <ligand>
        <name>Zn(2+)</name>
        <dbReference type="ChEBI" id="CHEBI:29105"/>
    </ligand>
</feature>
<feature type="binding site" evidence="2">
    <location>
        <position position="229"/>
    </location>
    <ligand>
        <name>Zn(2+)</name>
        <dbReference type="ChEBI" id="CHEBI:29105"/>
    </ligand>
</feature>
<feature type="binding site" evidence="2">
    <location>
        <position position="245"/>
    </location>
    <ligand>
        <name>Zn(2+)</name>
        <dbReference type="ChEBI" id="CHEBI:29105"/>
    </ligand>
</feature>